<accession>Q9SZ54</accession>
<organism>
    <name type="scientific">Arabidopsis thaliana</name>
    <name type="common">Mouse-ear cress</name>
    <dbReference type="NCBI Taxonomy" id="3702"/>
    <lineage>
        <taxon>Eukaryota</taxon>
        <taxon>Viridiplantae</taxon>
        <taxon>Streptophyta</taxon>
        <taxon>Embryophyta</taxon>
        <taxon>Tracheophyta</taxon>
        <taxon>Spermatophyta</taxon>
        <taxon>Magnoliopsida</taxon>
        <taxon>eudicotyledons</taxon>
        <taxon>Gunneridae</taxon>
        <taxon>Pentapetalae</taxon>
        <taxon>rosids</taxon>
        <taxon>malvids</taxon>
        <taxon>Brassicales</taxon>
        <taxon>Brassicaceae</taxon>
        <taxon>Camelineae</taxon>
        <taxon>Arabidopsis</taxon>
    </lineage>
</organism>
<reference key="1">
    <citation type="journal article" date="1999" name="Nature">
        <title>Sequence and analysis of chromosome 4 of the plant Arabidopsis thaliana.</title>
        <authorList>
            <person name="Mayer K.F.X."/>
            <person name="Schueller C."/>
            <person name="Wambutt R."/>
            <person name="Murphy G."/>
            <person name="Volckaert G."/>
            <person name="Pohl T."/>
            <person name="Duesterhoeft A."/>
            <person name="Stiekema W."/>
            <person name="Entian K.-D."/>
            <person name="Terryn N."/>
            <person name="Harris B."/>
            <person name="Ansorge W."/>
            <person name="Brandt P."/>
            <person name="Grivell L.A."/>
            <person name="Rieger M."/>
            <person name="Weichselgartner M."/>
            <person name="de Simone V."/>
            <person name="Obermaier B."/>
            <person name="Mache R."/>
            <person name="Mueller M."/>
            <person name="Kreis M."/>
            <person name="Delseny M."/>
            <person name="Puigdomenech P."/>
            <person name="Watson M."/>
            <person name="Schmidtheini T."/>
            <person name="Reichert B."/>
            <person name="Portetelle D."/>
            <person name="Perez-Alonso M."/>
            <person name="Boutry M."/>
            <person name="Bancroft I."/>
            <person name="Vos P."/>
            <person name="Hoheisel J."/>
            <person name="Zimmermann W."/>
            <person name="Wedler H."/>
            <person name="Ridley P."/>
            <person name="Langham S.-A."/>
            <person name="McCullagh B."/>
            <person name="Bilham L."/>
            <person name="Robben J."/>
            <person name="van der Schueren J."/>
            <person name="Grymonprez B."/>
            <person name="Chuang Y.-J."/>
            <person name="Vandenbussche F."/>
            <person name="Braeken M."/>
            <person name="Weltjens I."/>
            <person name="Voet M."/>
            <person name="Bastiaens I."/>
            <person name="Aert R."/>
            <person name="Defoor E."/>
            <person name="Weitzenegger T."/>
            <person name="Bothe G."/>
            <person name="Ramsperger U."/>
            <person name="Hilbert H."/>
            <person name="Braun M."/>
            <person name="Holzer E."/>
            <person name="Brandt A."/>
            <person name="Peters S."/>
            <person name="van Staveren M."/>
            <person name="Dirkse W."/>
            <person name="Mooijman P."/>
            <person name="Klein Lankhorst R."/>
            <person name="Rose M."/>
            <person name="Hauf J."/>
            <person name="Koetter P."/>
            <person name="Berneiser S."/>
            <person name="Hempel S."/>
            <person name="Feldpausch M."/>
            <person name="Lamberth S."/>
            <person name="Van den Daele H."/>
            <person name="De Keyser A."/>
            <person name="Buysshaert C."/>
            <person name="Gielen J."/>
            <person name="Villarroel R."/>
            <person name="De Clercq R."/>
            <person name="van Montagu M."/>
            <person name="Rogers J."/>
            <person name="Cronin A."/>
            <person name="Quail M.A."/>
            <person name="Bray-Allen S."/>
            <person name="Clark L."/>
            <person name="Doggett J."/>
            <person name="Hall S."/>
            <person name="Kay M."/>
            <person name="Lennard N."/>
            <person name="McLay K."/>
            <person name="Mayes R."/>
            <person name="Pettett A."/>
            <person name="Rajandream M.A."/>
            <person name="Lyne M."/>
            <person name="Benes V."/>
            <person name="Rechmann S."/>
            <person name="Borkova D."/>
            <person name="Bloecker H."/>
            <person name="Scharfe M."/>
            <person name="Grimm M."/>
            <person name="Loehnert T.-H."/>
            <person name="Dose S."/>
            <person name="de Haan M."/>
            <person name="Maarse A.C."/>
            <person name="Schaefer M."/>
            <person name="Mueller-Auer S."/>
            <person name="Gabel C."/>
            <person name="Fuchs M."/>
            <person name="Fartmann B."/>
            <person name="Granderath K."/>
            <person name="Dauner D."/>
            <person name="Herzl A."/>
            <person name="Neumann S."/>
            <person name="Argiriou A."/>
            <person name="Vitale D."/>
            <person name="Liguori R."/>
            <person name="Piravandi E."/>
            <person name="Massenet O."/>
            <person name="Quigley F."/>
            <person name="Clabauld G."/>
            <person name="Muendlein A."/>
            <person name="Felber R."/>
            <person name="Schnabl S."/>
            <person name="Hiller R."/>
            <person name="Schmidt W."/>
            <person name="Lecharny A."/>
            <person name="Aubourg S."/>
            <person name="Chefdor F."/>
            <person name="Cooke R."/>
            <person name="Berger C."/>
            <person name="Monfort A."/>
            <person name="Casacuberta E."/>
            <person name="Gibbons T."/>
            <person name="Weber N."/>
            <person name="Vandenbol M."/>
            <person name="Bargues M."/>
            <person name="Terol J."/>
            <person name="Torres A."/>
            <person name="Perez-Perez A."/>
            <person name="Purnelle B."/>
            <person name="Bent E."/>
            <person name="Johnson S."/>
            <person name="Tacon D."/>
            <person name="Jesse T."/>
            <person name="Heijnen L."/>
            <person name="Schwarz S."/>
            <person name="Scholler P."/>
            <person name="Heber S."/>
            <person name="Francs P."/>
            <person name="Bielke C."/>
            <person name="Frishman D."/>
            <person name="Haase D."/>
            <person name="Lemcke K."/>
            <person name="Mewes H.-W."/>
            <person name="Stocker S."/>
            <person name="Zaccaria P."/>
            <person name="Bevan M."/>
            <person name="Wilson R.K."/>
            <person name="de la Bastide M."/>
            <person name="Habermann K."/>
            <person name="Parnell L."/>
            <person name="Dedhia N."/>
            <person name="Gnoj L."/>
            <person name="Schutz K."/>
            <person name="Huang E."/>
            <person name="Spiegel L."/>
            <person name="Sekhon M."/>
            <person name="Murray J."/>
            <person name="Sheet P."/>
            <person name="Cordes M."/>
            <person name="Abu-Threideh J."/>
            <person name="Stoneking T."/>
            <person name="Kalicki J."/>
            <person name="Graves T."/>
            <person name="Harmon G."/>
            <person name="Edwards J."/>
            <person name="Latreille P."/>
            <person name="Courtney L."/>
            <person name="Cloud J."/>
            <person name="Abbott A."/>
            <person name="Scott K."/>
            <person name="Johnson D."/>
            <person name="Minx P."/>
            <person name="Bentley D."/>
            <person name="Fulton B."/>
            <person name="Miller N."/>
            <person name="Greco T."/>
            <person name="Kemp K."/>
            <person name="Kramer J."/>
            <person name="Fulton L."/>
            <person name="Mardis E."/>
            <person name="Dante M."/>
            <person name="Pepin K."/>
            <person name="Hillier L.W."/>
            <person name="Nelson J."/>
            <person name="Spieth J."/>
            <person name="Ryan E."/>
            <person name="Andrews S."/>
            <person name="Geisel C."/>
            <person name="Layman D."/>
            <person name="Du H."/>
            <person name="Ali J."/>
            <person name="Berghoff A."/>
            <person name="Jones K."/>
            <person name="Drone K."/>
            <person name="Cotton M."/>
            <person name="Joshu C."/>
            <person name="Antonoiu B."/>
            <person name="Zidanic M."/>
            <person name="Strong C."/>
            <person name="Sun H."/>
            <person name="Lamar B."/>
            <person name="Yordan C."/>
            <person name="Ma P."/>
            <person name="Zhong J."/>
            <person name="Preston R."/>
            <person name="Vil D."/>
            <person name="Shekher M."/>
            <person name="Matero A."/>
            <person name="Shah R."/>
            <person name="Swaby I.K."/>
            <person name="O'Shaughnessy A."/>
            <person name="Rodriguez M."/>
            <person name="Hoffman J."/>
            <person name="Till S."/>
            <person name="Granat S."/>
            <person name="Shohdy N."/>
            <person name="Hasegawa A."/>
            <person name="Hameed A."/>
            <person name="Lodhi M."/>
            <person name="Johnson A."/>
            <person name="Chen E."/>
            <person name="Marra M.A."/>
            <person name="Martienssen R."/>
            <person name="McCombie W.R."/>
        </authorList>
    </citation>
    <scope>NUCLEOTIDE SEQUENCE [LARGE SCALE GENOMIC DNA]</scope>
    <source>
        <strain>cv. Columbia</strain>
    </source>
</reference>
<reference key="2">
    <citation type="journal article" date="2017" name="Plant J.">
        <title>Araport11: a complete reannotation of the Arabidopsis thaliana reference genome.</title>
        <authorList>
            <person name="Cheng C.Y."/>
            <person name="Krishnakumar V."/>
            <person name="Chan A.P."/>
            <person name="Thibaud-Nissen F."/>
            <person name="Schobel S."/>
            <person name="Town C.D."/>
        </authorList>
    </citation>
    <scope>GENOME REANNOTATION</scope>
    <source>
        <strain>cv. Columbia</strain>
    </source>
</reference>
<reference key="3">
    <citation type="journal article" date="2003" name="Plant J.">
        <title>Glutathione peroxidase genes in Arabidopsis are ubiquitous and regulated by abiotic stresses through diverse signaling pathways.</title>
        <authorList>
            <person name="Rodriguez Milla M.A."/>
            <person name="Maurer A."/>
            <person name="Rodriguez Huete A."/>
            <person name="Gustafson J.P."/>
        </authorList>
    </citation>
    <scope>GENE FAMILY</scope>
    <scope>NOMENCLATURE</scope>
</reference>
<dbReference type="EC" id="1.11.1.9"/>
<dbReference type="EMBL" id="AL049607">
    <property type="protein sequence ID" value="CAB40757.1"/>
    <property type="status" value="ALT_SEQ"/>
    <property type="molecule type" value="Genomic_DNA"/>
</dbReference>
<dbReference type="EMBL" id="AL161579">
    <property type="protein sequence ID" value="CAB79905.1"/>
    <property type="status" value="ALT_SEQ"/>
    <property type="molecule type" value="Genomic_DNA"/>
</dbReference>
<dbReference type="EMBL" id="CP002687">
    <property type="protein sequence ID" value="AEE85970.1"/>
    <property type="molecule type" value="Genomic_DNA"/>
</dbReference>
<dbReference type="PIR" id="T06309">
    <property type="entry name" value="T06309"/>
</dbReference>
<dbReference type="RefSeq" id="NP_194915.2">
    <property type="nucleotide sequence ID" value="NM_119337.3"/>
</dbReference>
<dbReference type="SMR" id="Q9SZ54"/>
<dbReference type="FunCoup" id="Q9SZ54">
    <property type="interactions" value="2060"/>
</dbReference>
<dbReference type="STRING" id="3702.Q9SZ54"/>
<dbReference type="PeroxiBase" id="2250">
    <property type="entry name" value="AtGPx07"/>
</dbReference>
<dbReference type="PaxDb" id="3702-AT4G31870.1"/>
<dbReference type="ProteomicsDB" id="222290"/>
<dbReference type="EnsemblPlants" id="AT4G31870.1">
    <property type="protein sequence ID" value="AT4G31870.1"/>
    <property type="gene ID" value="AT4G31870"/>
</dbReference>
<dbReference type="GeneID" id="829316"/>
<dbReference type="Gramene" id="AT4G31870.1">
    <property type="protein sequence ID" value="AT4G31870.1"/>
    <property type="gene ID" value="AT4G31870"/>
</dbReference>
<dbReference type="KEGG" id="ath:AT4G31870"/>
<dbReference type="Araport" id="AT4G31870"/>
<dbReference type="TAIR" id="AT4G31870">
    <property type="gene designation" value="GPX7"/>
</dbReference>
<dbReference type="eggNOG" id="KOG1651">
    <property type="taxonomic scope" value="Eukaryota"/>
</dbReference>
<dbReference type="HOGENOM" id="CLU_029507_0_0_1"/>
<dbReference type="InParanoid" id="Q9SZ54"/>
<dbReference type="OMA" id="INESIMN"/>
<dbReference type="OrthoDB" id="446890at2759"/>
<dbReference type="BioCyc" id="ARA:AT4G31870-MONOMER"/>
<dbReference type="PRO" id="PR:Q9SZ54"/>
<dbReference type="Proteomes" id="UP000006548">
    <property type="component" value="Chromosome 4"/>
</dbReference>
<dbReference type="ExpressionAtlas" id="Q9SZ54">
    <property type="expression patterns" value="baseline and differential"/>
</dbReference>
<dbReference type="GO" id="GO:0009507">
    <property type="term" value="C:chloroplast"/>
    <property type="evidence" value="ECO:0000314"/>
    <property type="project" value="TAIR"/>
</dbReference>
<dbReference type="GO" id="GO:0005886">
    <property type="term" value="C:plasma membrane"/>
    <property type="evidence" value="ECO:0007005"/>
    <property type="project" value="TAIR"/>
</dbReference>
<dbReference type="GO" id="GO:0004602">
    <property type="term" value="F:glutathione peroxidase activity"/>
    <property type="evidence" value="ECO:0007669"/>
    <property type="project" value="UniProtKB-EC"/>
</dbReference>
<dbReference type="GO" id="GO:1900367">
    <property type="term" value="P:positive regulation of defense response to insect"/>
    <property type="evidence" value="ECO:0000315"/>
    <property type="project" value="TAIR"/>
</dbReference>
<dbReference type="GO" id="GO:0006979">
    <property type="term" value="P:response to oxidative stress"/>
    <property type="evidence" value="ECO:0007669"/>
    <property type="project" value="InterPro"/>
</dbReference>
<dbReference type="CDD" id="cd00340">
    <property type="entry name" value="GSH_Peroxidase"/>
    <property type="match status" value="1"/>
</dbReference>
<dbReference type="FunFam" id="3.40.30.10:FF:000025">
    <property type="entry name" value="Glutathione peroxidase"/>
    <property type="match status" value="1"/>
</dbReference>
<dbReference type="Gene3D" id="3.40.30.10">
    <property type="entry name" value="Glutaredoxin"/>
    <property type="match status" value="1"/>
</dbReference>
<dbReference type="InterPro" id="IPR000889">
    <property type="entry name" value="Glutathione_peroxidase"/>
</dbReference>
<dbReference type="InterPro" id="IPR029759">
    <property type="entry name" value="GPX_AS"/>
</dbReference>
<dbReference type="InterPro" id="IPR029760">
    <property type="entry name" value="GPX_CS"/>
</dbReference>
<dbReference type="InterPro" id="IPR036249">
    <property type="entry name" value="Thioredoxin-like_sf"/>
</dbReference>
<dbReference type="InterPro" id="IPR013766">
    <property type="entry name" value="Thioredoxin_domain"/>
</dbReference>
<dbReference type="PANTHER" id="PTHR11592">
    <property type="entry name" value="GLUTATHIONE PEROXIDASE"/>
    <property type="match status" value="1"/>
</dbReference>
<dbReference type="PANTHER" id="PTHR11592:SF132">
    <property type="entry name" value="GLUTATHIONE PEROXIDASE 7, CHLOROPLASTIC-RELATED"/>
    <property type="match status" value="1"/>
</dbReference>
<dbReference type="Pfam" id="PF00255">
    <property type="entry name" value="GSHPx"/>
    <property type="match status" value="1"/>
</dbReference>
<dbReference type="PRINTS" id="PR01011">
    <property type="entry name" value="GLUTPROXDASE"/>
</dbReference>
<dbReference type="SUPFAM" id="SSF52833">
    <property type="entry name" value="Thioredoxin-like"/>
    <property type="match status" value="1"/>
</dbReference>
<dbReference type="PROSITE" id="PS00460">
    <property type="entry name" value="GLUTATHIONE_PEROXID_1"/>
    <property type="match status" value="1"/>
</dbReference>
<dbReference type="PROSITE" id="PS00763">
    <property type="entry name" value="GLUTATHIONE_PEROXID_2"/>
    <property type="match status" value="1"/>
</dbReference>
<dbReference type="PROSITE" id="PS51355">
    <property type="entry name" value="GLUTATHIONE_PEROXID_3"/>
    <property type="match status" value="1"/>
</dbReference>
<protein>
    <recommendedName>
        <fullName>Putative glutathione peroxidase 7, chloroplastic</fullName>
        <ecNumber>1.11.1.9</ecNumber>
    </recommendedName>
</protein>
<proteinExistence type="inferred from homology"/>
<evidence type="ECO:0000250" key="1"/>
<evidence type="ECO:0000255" key="2"/>
<evidence type="ECO:0000305" key="3"/>
<comment type="function">
    <text evidence="1">May constitute a glutathione peroxidase-like protective system against oxidative stresses.</text>
</comment>
<comment type="catalytic activity">
    <reaction>
        <text>2 glutathione + H2O2 = glutathione disulfide + 2 H2O</text>
        <dbReference type="Rhea" id="RHEA:16833"/>
        <dbReference type="ChEBI" id="CHEBI:15377"/>
        <dbReference type="ChEBI" id="CHEBI:16240"/>
        <dbReference type="ChEBI" id="CHEBI:57925"/>
        <dbReference type="ChEBI" id="CHEBI:58297"/>
        <dbReference type="EC" id="1.11.1.9"/>
    </reaction>
</comment>
<comment type="subcellular location">
    <subcellularLocation>
        <location evidence="3">Plastid</location>
        <location evidence="3">Chloroplast</location>
    </subcellularLocation>
</comment>
<comment type="similarity">
    <text evidence="3">Belongs to the glutathione peroxidase family.</text>
</comment>
<comment type="sequence caution" evidence="3">
    <conflict type="erroneous gene model prediction">
        <sequence resource="EMBL-CDS" id="CAB40757"/>
    </conflict>
</comment>
<comment type="sequence caution" evidence="3">
    <conflict type="erroneous gene model prediction">
        <sequence resource="EMBL-CDS" id="CAB79905"/>
    </conflict>
</comment>
<feature type="transit peptide" description="Chloroplast" evidence="2">
    <location>
        <begin position="1"/>
        <end position="69"/>
    </location>
</feature>
<feature type="chain" id="PRO_0000045459" description="Putative glutathione peroxidase 7, chloroplastic">
    <location>
        <begin position="70"/>
        <end position="233"/>
    </location>
</feature>
<feature type="active site" evidence="1">
    <location>
        <position position="108"/>
    </location>
</feature>
<sequence length="233" mass="25774">MAFSYASFSTPFNGFAANPSPITSAFLGPSLRFSTRTSKTRNPSNGVSVKSSNSHRFLVKSKNFSVYARAAAEKSVHDFTVKDIDGNDVSLDKFKGKPLLIVNVASRCGLTSSNYSELSQLYEKYKNQGFEILAFPCNQFGGQEPGSNPEIKQFACTRFKAEFPIFDKVDVNGPSTAPIYKFLKSNAGGFLGDIIKWNFEKFLVDKKGKVVERYPPTTSPFQIEKDIQKLLAA</sequence>
<gene>
    <name type="primary">GPX7</name>
    <name type="ordered locus">At4g31870</name>
    <name type="ORF">F11C18.70</name>
</gene>
<name>GPX7_ARATH</name>
<keyword id="KW-0150">Chloroplast</keyword>
<keyword id="KW-0560">Oxidoreductase</keyword>
<keyword id="KW-0575">Peroxidase</keyword>
<keyword id="KW-0934">Plastid</keyword>
<keyword id="KW-1185">Reference proteome</keyword>
<keyword id="KW-0809">Transit peptide</keyword>